<protein>
    <recommendedName>
        <fullName evidence="18">UDP-glucuronosyltransferase 1A10</fullName>
        <shortName evidence="17">UGT1A10</shortName>
        <ecNumber evidence="8 9 10 11 12 14 15">2.4.1.17</ecNumber>
    </recommendedName>
    <alternativeName>
        <fullName>UDP-glucuronosyltransferase 1-10</fullName>
        <shortName>UDPGT 1-10</shortName>
        <shortName>UGT1*10</shortName>
        <shortName>UGT1-10</shortName>
        <shortName>UGT1.10</shortName>
    </alternativeName>
    <alternativeName>
        <fullName>UDP-glucuronosyltransferase 1-J</fullName>
        <shortName>UGT-1J</shortName>
        <shortName>UGT1J</shortName>
    </alternativeName>
</protein>
<sequence length="530" mass="59810">MARAGWTSPVPLCVCLLLTCGFAEAGKLLVVPMDGSHWFTMQSVVEKLILRGHEVVVVMPEVSWQLERSLNCTVKTYSTSYTLEDQNREFMVFAHAQWKAQAQSIFSLLMSSSSGFLDLFFSHCRSLFNDRKLVEYLKESSFDAVFLDPFDTCGLIVAKYFSLPSVVFTRGIFCHHLEEGAQCPAPLSYVPNDLLGFSDAMTFKERVWNHIVHLEDHLFCQYLFRNALEIASEILQTPVTAYDLYSHTSIWLLRTDFVLDYPKPVMPNMIFIGGINCHQGKPLPMEFEAYINASGEHGIVVFSLGSMVSEIPEKKAMAIADALGKIPQTVLWRYTGTRPSNLANNTILVKWLPQNDLLGHPMTRAFITHAGSHGVYESICNGVPMVMMPLFGDQMDNAKRMETKGAGVTLNVLEMTSEDLENALKAVINDKSYKENIMRLSSLHKDRPVEPLDLAVFWVEFVMRHKGAPHLRPAAHDLTWYQYHSLDVIGFLLAVVLTVAFITFKCCAYGYRKCLGKKGRVKKAHKSKTH</sequence>
<accession>Q9HAW8</accession>
<accession>O00474</accession>
<accession>Q6NT91</accession>
<accession>Q7Z6H8</accession>
<dbReference type="EC" id="2.4.1.17" evidence="8 9 10 11 12 14 15"/>
<dbReference type="EMBL" id="U89508">
    <property type="protein sequence ID" value="AAB81537.1"/>
    <property type="molecule type" value="mRNA"/>
</dbReference>
<dbReference type="EMBL" id="AF297093">
    <property type="protein sequence ID" value="AAG30417.1"/>
    <property type="molecule type" value="Genomic_DNA"/>
</dbReference>
<dbReference type="EMBL" id="AC006985">
    <property type="status" value="NOT_ANNOTATED_CDS"/>
    <property type="molecule type" value="Genomic_DNA"/>
</dbReference>
<dbReference type="EMBL" id="AC019072">
    <property type="status" value="NOT_ANNOTATED_CDS"/>
    <property type="molecule type" value="Genomic_DNA"/>
</dbReference>
<dbReference type="EMBL" id="BC020971">
    <property type="protein sequence ID" value="AAH20971.1"/>
    <property type="molecule type" value="mRNA"/>
</dbReference>
<dbReference type="EMBL" id="BC053576">
    <property type="protein sequence ID" value="AAH53576.1"/>
    <property type="molecule type" value="mRNA"/>
</dbReference>
<dbReference type="EMBL" id="BC069210">
    <property type="protein sequence ID" value="AAH69210.2"/>
    <property type="molecule type" value="mRNA"/>
</dbReference>
<dbReference type="CCDS" id="CCDS33403.1">
    <molecule id="Q9HAW8-1"/>
</dbReference>
<dbReference type="PIR" id="JC5656">
    <property type="entry name" value="JC5656"/>
</dbReference>
<dbReference type="RefSeq" id="NP_061948.1">
    <molecule id="Q9HAW8-1"/>
    <property type="nucleotide sequence ID" value="NM_019075.4"/>
</dbReference>
<dbReference type="SMR" id="Q9HAW8"/>
<dbReference type="BioGRID" id="120053">
    <property type="interactions" value="43"/>
</dbReference>
<dbReference type="FunCoup" id="Q9HAW8">
    <property type="interactions" value="355"/>
</dbReference>
<dbReference type="IntAct" id="Q9HAW8">
    <property type="interactions" value="31"/>
</dbReference>
<dbReference type="STRING" id="9606.ENSP00000343838"/>
<dbReference type="BindingDB" id="Q9HAW8"/>
<dbReference type="ChEMBL" id="CHEMBL1743320"/>
<dbReference type="DrugBank" id="DB00714">
    <property type="generic name" value="Apomorphine"/>
</dbReference>
<dbReference type="DrugBank" id="DB06401">
    <property type="generic name" value="Bazedoxifene"/>
</dbReference>
<dbReference type="DrugBank" id="DB14737">
    <property type="generic name" value="Cannabinol"/>
</dbReference>
<dbReference type="DrugBank" id="DB14635">
    <property type="generic name" value="Curcumin sulfate"/>
</dbReference>
<dbReference type="DrugBank" id="DB00470">
    <property type="generic name" value="Dronabinol"/>
</dbReference>
<dbReference type="DrugBank" id="DB12243">
    <property type="generic name" value="Edaravone"/>
</dbReference>
<dbReference type="DrugBank" id="DB11979">
    <property type="generic name" value="Elagolix"/>
</dbReference>
<dbReference type="DrugBank" id="DB00783">
    <property type="generic name" value="Estradiol"/>
</dbReference>
<dbReference type="DrugBank" id="DB00749">
    <property type="generic name" value="Etodolac"/>
</dbReference>
<dbReference type="DrugBank" id="DB11796">
    <property type="generic name" value="Fostemsavir"/>
</dbReference>
<dbReference type="DrugBank" id="DB12471">
    <property type="generic name" value="Ibrexafungerp"/>
</dbReference>
<dbReference type="DrugBank" id="DB00555">
    <property type="generic name" value="Lamotrigine"/>
</dbReference>
<dbReference type="DrugBank" id="DB00678">
    <property type="generic name" value="Losartan"/>
</dbReference>
<dbReference type="DrugBank" id="DB14009">
    <property type="generic name" value="Medical Cannabis"/>
</dbReference>
<dbReference type="DrugBank" id="DB05018">
    <property type="generic name" value="Migalastat"/>
</dbReference>
<dbReference type="DrugBank" id="DB00688">
    <property type="generic name" value="Mycophenolate mofetil"/>
</dbReference>
<dbReference type="DrugBank" id="DB01024">
    <property type="generic name" value="Mycophenolic acid"/>
</dbReference>
<dbReference type="DrugBank" id="DB08804">
    <property type="generic name" value="Nandrolone decanoate"/>
</dbReference>
<dbReference type="DrugBank" id="DB00788">
    <property type="generic name" value="Naproxen"/>
</dbReference>
<dbReference type="DrugBank" id="DB09079">
    <property type="generic name" value="Nintedanib"/>
</dbReference>
<dbReference type="DrugBank" id="DB00960">
    <property type="generic name" value="Pindolol"/>
</dbReference>
<dbReference type="DrugBank" id="DB00794">
    <property type="generic name" value="Primidone"/>
</dbReference>
<dbReference type="DrugBank" id="DB09288">
    <property type="generic name" value="Propacetamol"/>
</dbReference>
<dbReference type="DrugBank" id="DB00481">
    <property type="generic name" value="Raloxifene"/>
</dbReference>
<dbReference type="DrugBank" id="DB00503">
    <property type="generic name" value="Ritonavir"/>
</dbReference>
<dbReference type="DrugBank" id="DB00675">
    <property type="generic name" value="Tamoxifen"/>
</dbReference>
<dbReference type="DrugBank" id="DB00871">
    <property type="generic name" value="Terbutaline"/>
</dbReference>
<dbReference type="DrugBank" id="DB00197">
    <property type="generic name" value="Troglitazone"/>
</dbReference>
<dbReference type="DrugBank" id="DB00313">
    <property type="generic name" value="Valproic acid"/>
</dbReference>
<dbReference type="DrugCentral" id="Q9HAW8"/>
<dbReference type="SwissLipids" id="SLP:000001694"/>
<dbReference type="CAZy" id="GT1">
    <property type="family name" value="Glycosyltransferase Family 1"/>
</dbReference>
<dbReference type="GlyConnect" id="1874">
    <property type="glycosylation" value="2 N-Linked glycans (1 site)"/>
</dbReference>
<dbReference type="GlyCosmos" id="Q9HAW8">
    <property type="glycosylation" value="3 sites, 2 glycans"/>
</dbReference>
<dbReference type="GlyGen" id="Q9HAW8">
    <property type="glycosylation" value="3 sites, 2 N-linked glycans (1 site)"/>
</dbReference>
<dbReference type="iPTMnet" id="Q9HAW8"/>
<dbReference type="PhosphoSitePlus" id="Q9HAW8"/>
<dbReference type="BioMuta" id="UGT1A10"/>
<dbReference type="DMDM" id="29839636"/>
<dbReference type="jPOST" id="Q9HAW8"/>
<dbReference type="MassIVE" id="Q9HAW8"/>
<dbReference type="PaxDb" id="9606-ENSP00000343838"/>
<dbReference type="PeptideAtlas" id="Q9HAW8"/>
<dbReference type="ProteomicsDB" id="69409"/>
<dbReference type="ProteomicsDB" id="81455">
    <molecule id="Q9HAW8-1"/>
</dbReference>
<dbReference type="Antibodypedia" id="35063">
    <property type="antibodies" value="38 antibodies from 19 providers"/>
</dbReference>
<dbReference type="DNASU" id="54575"/>
<dbReference type="Ensembl" id="ENST00000344644.10">
    <molecule id="Q9HAW8-1"/>
    <property type="protein sequence ID" value="ENSP00000343838.5"/>
    <property type="gene ID" value="ENSG00000242515.6"/>
</dbReference>
<dbReference type="Ensembl" id="ENST00000373445.1">
    <molecule id="Q9HAW8-2"/>
    <property type="protein sequence ID" value="ENSP00000362544.1"/>
    <property type="gene ID" value="ENSG00000242515.6"/>
</dbReference>
<dbReference type="GeneID" id="54575"/>
<dbReference type="KEGG" id="hsa:54575"/>
<dbReference type="MANE-Select" id="ENST00000344644.10">
    <property type="protein sequence ID" value="ENSP00000343838.5"/>
    <property type="RefSeq nucleotide sequence ID" value="NM_019075.4"/>
    <property type="RefSeq protein sequence ID" value="NP_061948.1"/>
</dbReference>
<dbReference type="UCSC" id="uc002vuq.4">
    <molecule id="Q9HAW8-1"/>
    <property type="organism name" value="human"/>
</dbReference>
<dbReference type="AGR" id="HGNC:12531"/>
<dbReference type="CTD" id="54575"/>
<dbReference type="DisGeNET" id="54575"/>
<dbReference type="GeneCards" id="UGT1A10"/>
<dbReference type="HGNC" id="HGNC:12531">
    <property type="gene designation" value="UGT1A10"/>
</dbReference>
<dbReference type="HPA" id="ENSG00000242515">
    <property type="expression patterns" value="Tissue enhanced (gallbladder, intestine, stomach)"/>
</dbReference>
<dbReference type="MalaCards" id="UGT1A10"/>
<dbReference type="MIM" id="191740">
    <property type="type" value="gene"/>
</dbReference>
<dbReference type="MIM" id="606435">
    <property type="type" value="gene"/>
</dbReference>
<dbReference type="neXtProt" id="NX_Q9HAW8"/>
<dbReference type="OpenTargets" id="ENSG00000242515"/>
<dbReference type="PharmGKB" id="PA37174"/>
<dbReference type="VEuPathDB" id="HostDB:ENSG00000242515"/>
<dbReference type="eggNOG" id="KOG1192">
    <property type="taxonomic scope" value="Eukaryota"/>
</dbReference>
<dbReference type="GeneTree" id="ENSGT00940000163976"/>
<dbReference type="HOGENOM" id="CLU_012949_3_1_1"/>
<dbReference type="InParanoid" id="Q9HAW8"/>
<dbReference type="OMA" id="WASWICC"/>
<dbReference type="OrthoDB" id="5835829at2759"/>
<dbReference type="PAN-GO" id="Q9HAW8">
    <property type="GO annotations" value="4 GO annotations based on evolutionary models"/>
</dbReference>
<dbReference type="PhylomeDB" id="Q9HAW8"/>
<dbReference type="TreeFam" id="TF315472"/>
<dbReference type="BRENDA" id="2.4.1.17">
    <property type="organism ID" value="2681"/>
</dbReference>
<dbReference type="PathwayCommons" id="Q9HAW8"/>
<dbReference type="Reactome" id="R-HSA-156588">
    <property type="pathway name" value="Glucuronidation"/>
</dbReference>
<dbReference type="Reactome" id="R-HSA-9753281">
    <property type="pathway name" value="Paracetamol ADME"/>
</dbReference>
<dbReference type="SABIO-RK" id="Q9HAW8"/>
<dbReference type="SignaLink" id="Q9HAW8"/>
<dbReference type="SIGNOR" id="Q9HAW8"/>
<dbReference type="BioGRID-ORCS" id="54575">
    <property type="hits" value="9 hits in 1024 CRISPR screens"/>
</dbReference>
<dbReference type="GeneWiki" id="UGT1A10"/>
<dbReference type="GenomeRNAi" id="54575"/>
<dbReference type="Pharos" id="Q9HAW8">
    <property type="development level" value="Tbio"/>
</dbReference>
<dbReference type="PRO" id="PR:Q9HAW8"/>
<dbReference type="Proteomes" id="UP000005640">
    <property type="component" value="Chromosome 2"/>
</dbReference>
<dbReference type="RNAct" id="Q9HAW8">
    <property type="molecule type" value="protein"/>
</dbReference>
<dbReference type="Bgee" id="ENSG00000242515">
    <property type="expression patterns" value="Expressed in mucosa of transverse colon and 46 other cell types or tissues"/>
</dbReference>
<dbReference type="ExpressionAtlas" id="Q9HAW8">
    <property type="expression patterns" value="baseline and differential"/>
</dbReference>
<dbReference type="GO" id="GO:0005783">
    <property type="term" value="C:endoplasmic reticulum"/>
    <property type="evidence" value="ECO:0000314"/>
    <property type="project" value="UniProtKB"/>
</dbReference>
<dbReference type="GO" id="GO:0005789">
    <property type="term" value="C:endoplasmic reticulum membrane"/>
    <property type="evidence" value="ECO:0000304"/>
    <property type="project" value="Reactome"/>
</dbReference>
<dbReference type="GO" id="GO:0019899">
    <property type="term" value="F:enzyme binding"/>
    <property type="evidence" value="ECO:0000353"/>
    <property type="project" value="BHF-UCL"/>
</dbReference>
<dbReference type="GO" id="GO:0004857">
    <property type="term" value="F:enzyme inhibitor activity"/>
    <property type="evidence" value="ECO:0000250"/>
    <property type="project" value="BHF-UCL"/>
</dbReference>
<dbReference type="GO" id="GO:0015020">
    <property type="term" value="F:glucuronosyltransferase activity"/>
    <property type="evidence" value="ECO:0000314"/>
    <property type="project" value="UniProtKB"/>
</dbReference>
<dbReference type="GO" id="GO:0046982">
    <property type="term" value="F:protein heterodimerization activity"/>
    <property type="evidence" value="ECO:0000353"/>
    <property type="project" value="BHF-UCL"/>
</dbReference>
<dbReference type="GO" id="GO:0042803">
    <property type="term" value="F:protein homodimerization activity"/>
    <property type="evidence" value="ECO:0000314"/>
    <property type="project" value="UniProtKB"/>
</dbReference>
<dbReference type="GO" id="GO:0005080">
    <property type="term" value="F:protein kinase C binding"/>
    <property type="evidence" value="ECO:0000353"/>
    <property type="project" value="BHF-UCL"/>
</dbReference>
<dbReference type="GO" id="GO:0051552">
    <property type="term" value="P:flavone metabolic process"/>
    <property type="evidence" value="ECO:0000314"/>
    <property type="project" value="BHF-UCL"/>
</dbReference>
<dbReference type="GO" id="GO:0006629">
    <property type="term" value="P:lipid metabolic process"/>
    <property type="evidence" value="ECO:0007669"/>
    <property type="project" value="UniProtKB-KW"/>
</dbReference>
<dbReference type="GO" id="GO:0001889">
    <property type="term" value="P:liver development"/>
    <property type="evidence" value="ECO:0000318"/>
    <property type="project" value="GO_Central"/>
</dbReference>
<dbReference type="GO" id="GO:0045922">
    <property type="term" value="P:negative regulation of fatty acid metabolic process"/>
    <property type="evidence" value="ECO:0000250"/>
    <property type="project" value="BHF-UCL"/>
</dbReference>
<dbReference type="GO" id="GO:0009407">
    <property type="term" value="P:toxin catabolic process"/>
    <property type="evidence" value="ECO:0000314"/>
    <property type="project" value="BHF-UCL"/>
</dbReference>
<dbReference type="GO" id="GO:0042178">
    <property type="term" value="P:xenobiotic catabolic process"/>
    <property type="evidence" value="ECO:0000314"/>
    <property type="project" value="BHF-UCL"/>
</dbReference>
<dbReference type="GO" id="GO:0006805">
    <property type="term" value="P:xenobiotic metabolic process"/>
    <property type="evidence" value="ECO:0000314"/>
    <property type="project" value="BHF-UCL"/>
</dbReference>
<dbReference type="CDD" id="cd03784">
    <property type="entry name" value="GT1_Gtf-like"/>
    <property type="match status" value="1"/>
</dbReference>
<dbReference type="FunFam" id="3.40.50.2000:FF:000001">
    <property type="entry name" value="UDP-glucuronosyltransferase"/>
    <property type="match status" value="1"/>
</dbReference>
<dbReference type="FunFam" id="3.40.50.2000:FF:000092">
    <property type="entry name" value="UDP-glucuronosyltransferase"/>
    <property type="match status" value="1"/>
</dbReference>
<dbReference type="Gene3D" id="3.40.50.2000">
    <property type="entry name" value="Glycogen Phosphorylase B"/>
    <property type="match status" value="2"/>
</dbReference>
<dbReference type="InterPro" id="IPR050271">
    <property type="entry name" value="UDP-glycosyltransferase"/>
</dbReference>
<dbReference type="InterPro" id="IPR002213">
    <property type="entry name" value="UDP_glucos_trans"/>
</dbReference>
<dbReference type="InterPro" id="IPR035595">
    <property type="entry name" value="UDP_glycos_trans_CS"/>
</dbReference>
<dbReference type="PANTHER" id="PTHR48043">
    <property type="entry name" value="EG:EG0003.4 PROTEIN-RELATED"/>
    <property type="match status" value="1"/>
</dbReference>
<dbReference type="PANTHER" id="PTHR48043:SF161">
    <property type="entry name" value="UDP GLUCURONOSYLTRANSFERASE FAMILY 1 MEMBER A1"/>
    <property type="match status" value="1"/>
</dbReference>
<dbReference type="Pfam" id="PF00201">
    <property type="entry name" value="UDPGT"/>
    <property type="match status" value="1"/>
</dbReference>
<dbReference type="SUPFAM" id="SSF53756">
    <property type="entry name" value="UDP-Glycosyltransferase/glycogen phosphorylase"/>
    <property type="match status" value="1"/>
</dbReference>
<dbReference type="PROSITE" id="PS00375">
    <property type="entry name" value="UDPGT"/>
    <property type="match status" value="1"/>
</dbReference>
<evidence type="ECO:0000255" key="1"/>
<evidence type="ECO:0000269" key="2">
    <source>
    </source>
</evidence>
<evidence type="ECO:0000269" key="3">
    <source>
    </source>
</evidence>
<evidence type="ECO:0000269" key="4">
    <source>
    </source>
</evidence>
<evidence type="ECO:0000269" key="5">
    <source>
    </source>
</evidence>
<evidence type="ECO:0000269" key="6">
    <source>
    </source>
</evidence>
<evidence type="ECO:0000269" key="7">
    <source>
    </source>
</evidence>
<evidence type="ECO:0000269" key="8">
    <source>
    </source>
</evidence>
<evidence type="ECO:0000269" key="9">
    <source>
    </source>
</evidence>
<evidence type="ECO:0000269" key="10">
    <source>
    </source>
</evidence>
<evidence type="ECO:0000269" key="11">
    <source>
    </source>
</evidence>
<evidence type="ECO:0000269" key="12">
    <source>
    </source>
</evidence>
<evidence type="ECO:0000269" key="13">
    <source>
    </source>
</evidence>
<evidence type="ECO:0000269" key="14">
    <source>
    </source>
</evidence>
<evidence type="ECO:0000269" key="15">
    <source>
    </source>
</evidence>
<evidence type="ECO:0000269" key="16">
    <source>
    </source>
</evidence>
<evidence type="ECO:0000303" key="17">
    <source>
    </source>
</evidence>
<evidence type="ECO:0000303" key="18">
    <source>
    </source>
</evidence>
<evidence type="ECO:0000303" key="19">
    <source>
    </source>
</evidence>
<evidence type="ECO:0000303" key="20">
    <source>
    </source>
</evidence>
<evidence type="ECO:0000305" key="21"/>
<evidence type="ECO:0000305" key="22">
    <source>
    </source>
</evidence>
<evidence type="ECO:0000305" key="23">
    <source>
    </source>
</evidence>
<evidence type="ECO:0000305" key="24">
    <source>
    </source>
</evidence>
<evidence type="ECO:0000305" key="25">
    <source>
    </source>
</evidence>
<evidence type="ECO:0000305" key="26">
    <source>
    </source>
</evidence>
<evidence type="ECO:0000305" key="27">
    <source>
    </source>
</evidence>
<evidence type="ECO:0000305" key="28">
    <source>
    </source>
</evidence>
<evidence type="ECO:0000305" key="29">
    <source>
    </source>
</evidence>
<evidence type="ECO:0000305" key="30">
    <source>
    </source>
</evidence>
<evidence type="ECO:0000305" key="31">
    <source>
    </source>
</evidence>
<evidence type="ECO:0000305" key="32">
    <source>
    </source>
</evidence>
<evidence type="ECO:0000305" key="33">
    <source>
    </source>
</evidence>
<evidence type="ECO:0000312" key="34">
    <source>
        <dbReference type="HGNC" id="HGNC:12531"/>
    </source>
</evidence>
<feature type="signal peptide" evidence="1">
    <location>
        <begin position="1"/>
        <end position="25"/>
    </location>
</feature>
<feature type="chain" id="PRO_0000036009" description="UDP-glucuronosyltransferase 1A10">
    <location>
        <begin position="26"/>
        <end position="530"/>
    </location>
</feature>
<feature type="transmembrane region" description="Helical" evidence="1">
    <location>
        <begin position="488"/>
        <end position="504"/>
    </location>
</feature>
<feature type="glycosylation site" description="N-linked (GlcNAc...) asparagine" evidence="1">
    <location>
        <position position="71"/>
    </location>
</feature>
<feature type="glycosylation site" description="N-linked (GlcNAc...) asparagine" evidence="1">
    <location>
        <position position="292"/>
    </location>
</feature>
<feature type="glycosylation site" description="N-linked (GlcNAc...) asparagine" evidence="1">
    <location>
        <position position="344"/>
    </location>
</feature>
<feature type="splice variant" id="VSP_053966" description="In isoform 2." evidence="19">
    <original>SYKENIMRLSSLHKDRPVEPLDLAVFWVEFVMRHKGAPHLRPAAHDLTWYQYHSLDVIGFLLAVVLTVAFITFKCCAYGYRKCLGKKGRVKKAHKSKTH</original>
    <variation>RKKQQSGRQM</variation>
    <location>
        <begin position="432"/>
        <end position="530"/>
    </location>
</feature>
<feature type="sequence variant" id="VAR_018354" description="In dbSNP:rs56935833." evidence="5">
    <original>M</original>
    <variation>I</variation>
    <location>
        <position position="59"/>
    </location>
</feature>
<feature type="sequence variant" id="VAR_052464" description="In dbSNP:rs10187694.">
    <original>E</original>
    <variation>K</variation>
    <location>
        <position position="139"/>
    </location>
</feature>
<feature type="sequence variant" id="VAR_018355" description="In dbSNP:rs58704432." evidence="5">
    <original>T</original>
    <variation>I</variation>
    <location>
        <position position="202"/>
    </location>
</feature>
<feature type="sequence variant" id="VAR_052465" description="In dbSNP:rs28969685.">
    <original>L</original>
    <variation>I</variation>
    <location>
        <position position="244"/>
    </location>
</feature>
<feature type="mutagenesis site" description="Loss of estrone and 16alpha-hydroxyestrone glucuronosyltransferase activity." evidence="14">
    <original>F</original>
    <variation>G</variation>
    <variation>A</variation>
    <variation>V</variation>
    <variation>L</variation>
    <variation>I</variation>
    <variation>Y</variation>
    <location>
        <position position="90"/>
    </location>
</feature>
<feature type="mutagenesis site" description="Increased estriol, 17-epiestriol and 16alpha-hydroxyestrone glucuronosyltransferase activity. Decreased of estrone and 16-epiestriol glucuronosyltransferase activity." evidence="14 15">
    <original>F</original>
    <variation>G</variation>
    <location>
        <position position="93"/>
    </location>
</feature>
<feature type="mutagenesis site" description="Loss of estrone and 16alpha-hydroxyestrone glucuronosyltransferase activity." evidence="14">
    <original>F</original>
    <variation>V</variation>
    <variation>L</variation>
    <variation>I</variation>
    <location>
        <position position="93"/>
    </location>
</feature>
<feature type="mutagenesis site" description="Decreased estrone and 16alpha-hydroxyestrone glucuronosyltransferase activity." evidence="14">
    <original>F</original>
    <variation>Y</variation>
    <location>
        <position position="93"/>
    </location>
</feature>
<feature type="sequence conflict" description="In Ref. 1." evidence="21" ref="1">
    <original>MARAGWTSPVPLCVCLLLTCGFA</original>
    <variation>MAPRRVDQPRSFMCVSTADLWLC</variation>
    <location>
        <begin position="1"/>
        <end position="23"/>
    </location>
</feature>
<feature type="sequence conflict" description="In Ref. 1; AAB81537." evidence="21" ref="1">
    <original>T</original>
    <variation>A</variation>
    <location>
        <position position="40"/>
    </location>
</feature>
<feature type="sequence conflict" description="In Ref. 1; AAB81537." evidence="21" ref="1">
    <original>H</original>
    <variation>R</variation>
    <location>
        <position position="175"/>
    </location>
</feature>
<feature type="sequence conflict" description="In Ref. 1; AAB81537." evidence="21" ref="1">
    <original>F</original>
    <variation>L</variation>
    <location>
        <position position="224"/>
    </location>
</feature>
<reference key="1">
    <citation type="journal article" date="1997" name="Mol. Pharmacol.">
        <title>Differential expression of the UGT1A locus in human liver, biliary, and gastric tissue: identification of UGT1A7 and UGT1A10 transcripts in extrahepatic tissue.</title>
        <authorList>
            <person name="Strassburg C.P."/>
            <person name="Oldhafer K."/>
            <person name="Manns M.P."/>
            <person name="Tukey R.H."/>
        </authorList>
    </citation>
    <scope>NUCLEOTIDE SEQUENCE [MRNA] (ISOFORM 1)</scope>
    <scope>TISSUE SPECIFICITY</scope>
</reference>
<reference key="2">
    <citation type="journal article" date="2001" name="Pharmacogenetics">
        <title>Thirteen UDP-glucuronosyltransferase genes are encoded at the human UGT1 gene complex locus.</title>
        <authorList>
            <person name="Gong Q.H."/>
            <person name="Cho J.W."/>
            <person name="Huang T."/>
            <person name="Potter C."/>
            <person name="Gholami N."/>
            <person name="Basu N.K."/>
            <person name="Kubota S."/>
            <person name="Carvalho S."/>
            <person name="Pennington M.W."/>
            <person name="Owens I.S."/>
            <person name="Popescu N.C."/>
        </authorList>
    </citation>
    <scope>NUCLEOTIDE SEQUENCE [GENOMIC DNA]</scope>
</reference>
<reference key="3">
    <citation type="journal article" date="2005" name="Nature">
        <title>Generation and annotation of the DNA sequences of human chromosomes 2 and 4.</title>
        <authorList>
            <person name="Hillier L.W."/>
            <person name="Graves T.A."/>
            <person name="Fulton R.S."/>
            <person name="Fulton L.A."/>
            <person name="Pepin K.H."/>
            <person name="Minx P."/>
            <person name="Wagner-McPherson C."/>
            <person name="Layman D."/>
            <person name="Wylie K."/>
            <person name="Sekhon M."/>
            <person name="Becker M.C."/>
            <person name="Fewell G.A."/>
            <person name="Delehaunty K.D."/>
            <person name="Miner T.L."/>
            <person name="Nash W.E."/>
            <person name="Kremitzki C."/>
            <person name="Oddy L."/>
            <person name="Du H."/>
            <person name="Sun H."/>
            <person name="Bradshaw-Cordum H."/>
            <person name="Ali J."/>
            <person name="Carter J."/>
            <person name="Cordes M."/>
            <person name="Harris A."/>
            <person name="Isak A."/>
            <person name="van Brunt A."/>
            <person name="Nguyen C."/>
            <person name="Du F."/>
            <person name="Courtney L."/>
            <person name="Kalicki J."/>
            <person name="Ozersky P."/>
            <person name="Abbott S."/>
            <person name="Armstrong J."/>
            <person name="Belter E.A."/>
            <person name="Caruso L."/>
            <person name="Cedroni M."/>
            <person name="Cotton M."/>
            <person name="Davidson T."/>
            <person name="Desai A."/>
            <person name="Elliott G."/>
            <person name="Erb T."/>
            <person name="Fronick C."/>
            <person name="Gaige T."/>
            <person name="Haakenson W."/>
            <person name="Haglund K."/>
            <person name="Holmes A."/>
            <person name="Harkins R."/>
            <person name="Kim K."/>
            <person name="Kruchowski S.S."/>
            <person name="Strong C.M."/>
            <person name="Grewal N."/>
            <person name="Goyea E."/>
            <person name="Hou S."/>
            <person name="Levy A."/>
            <person name="Martinka S."/>
            <person name="Mead K."/>
            <person name="McLellan M.D."/>
            <person name="Meyer R."/>
            <person name="Randall-Maher J."/>
            <person name="Tomlinson C."/>
            <person name="Dauphin-Kohlberg S."/>
            <person name="Kozlowicz-Reilly A."/>
            <person name="Shah N."/>
            <person name="Swearengen-Shahid S."/>
            <person name="Snider J."/>
            <person name="Strong J.T."/>
            <person name="Thompson J."/>
            <person name="Yoakum M."/>
            <person name="Leonard S."/>
            <person name="Pearman C."/>
            <person name="Trani L."/>
            <person name="Radionenko M."/>
            <person name="Waligorski J.E."/>
            <person name="Wang C."/>
            <person name="Rock S.M."/>
            <person name="Tin-Wollam A.-M."/>
            <person name="Maupin R."/>
            <person name="Latreille P."/>
            <person name="Wendl M.C."/>
            <person name="Yang S.-P."/>
            <person name="Pohl C."/>
            <person name="Wallis J.W."/>
            <person name="Spieth J."/>
            <person name="Bieri T.A."/>
            <person name="Berkowicz N."/>
            <person name="Nelson J.O."/>
            <person name="Osborne J."/>
            <person name="Ding L."/>
            <person name="Meyer R."/>
            <person name="Sabo A."/>
            <person name="Shotland Y."/>
            <person name="Sinha P."/>
            <person name="Wohldmann P.E."/>
            <person name="Cook L.L."/>
            <person name="Hickenbotham M.T."/>
            <person name="Eldred J."/>
            <person name="Williams D."/>
            <person name="Jones T.A."/>
            <person name="She X."/>
            <person name="Ciccarelli F.D."/>
            <person name="Izaurralde E."/>
            <person name="Taylor J."/>
            <person name="Schmutz J."/>
            <person name="Myers R.M."/>
            <person name="Cox D.R."/>
            <person name="Huang X."/>
            <person name="McPherson J.D."/>
            <person name="Mardis E.R."/>
            <person name="Clifton S.W."/>
            <person name="Warren W.C."/>
            <person name="Chinwalla A.T."/>
            <person name="Eddy S.R."/>
            <person name="Marra M.A."/>
            <person name="Ovcharenko I."/>
            <person name="Furey T.S."/>
            <person name="Miller W."/>
            <person name="Eichler E.E."/>
            <person name="Bork P."/>
            <person name="Suyama M."/>
            <person name="Torrents D."/>
            <person name="Waterston R.H."/>
            <person name="Wilson R.K."/>
        </authorList>
    </citation>
    <scope>NUCLEOTIDE SEQUENCE [LARGE SCALE GENOMIC DNA]</scope>
</reference>
<reference key="4">
    <citation type="journal article" date="2004" name="Genome Res.">
        <title>The status, quality, and expansion of the NIH full-length cDNA project: the Mammalian Gene Collection (MGC).</title>
        <authorList>
            <consortium name="The MGC Project Team"/>
        </authorList>
    </citation>
    <scope>NUCLEOTIDE SEQUENCE [LARGE SCALE MRNA] (ISOFORMS 1 AND 2)</scope>
    <source>
        <tissue>Colon</tissue>
        <tissue>Kidney</tissue>
    </source>
</reference>
<reference key="5">
    <citation type="journal article" date="2002" name="Mol. Pharmacol.">
        <title>Common human UGT1A polymorphisms and the altered metabolism of irinotecan active metabolite 7-ethyl-10-hydroxycamptothecin (SN-38).</title>
        <authorList>
            <person name="Gagne J.F."/>
            <person name="Montminy V."/>
            <person name="Belanger P."/>
            <person name="Journault K."/>
            <person name="Gaucher G."/>
            <person name="Guillemette C."/>
        </authorList>
    </citation>
    <scope>FUNCTION (ISOFORM 1)</scope>
    <scope>CATALYTIC ACTIVITY</scope>
    <scope>BIOPHYSICOCHEMICAL PROPERTIES</scope>
</reference>
<reference key="6">
    <citation type="journal article" date="2004" name="J. Clin. Endocrinol. Metab.">
        <title>Specificity and regioselectivity of the conjugation of estradiol, estrone, and their catecholestrogen and methoxyestrogen metabolites by human uridine diphospho-glucuronosyltransferases expressed in endometrium.</title>
        <authorList>
            <person name="Lepine J."/>
            <person name="Bernard O."/>
            <person name="Plante M."/>
            <person name="Tetu B."/>
            <person name="Pelletier G."/>
            <person name="Labrie F."/>
            <person name="Belanger A."/>
            <person name="Guillemette C."/>
        </authorList>
    </citation>
    <scope>BIOPHYSICOCHEMICAL PROPERTIES</scope>
</reference>
<reference key="7">
    <citation type="journal article" date="2004" name="J. Lipid Res.">
        <title>Glucuronidation of oxidized fatty acids and prostaglandins B1 and E2 by human hepatic and recombinant UDP-glucuronosyltransferases.</title>
        <authorList>
            <person name="Little J.M."/>
            <person name="Kurkela M."/>
            <person name="Sonka J."/>
            <person name="Jaentti S."/>
            <person name="Ketola R."/>
            <person name="Bratton S."/>
            <person name="Finel M."/>
            <person name="Radominska-Pandya A."/>
        </authorList>
    </citation>
    <scope>FUNCTION</scope>
    <scope>CATALYTIC ACTIVITY</scope>
    <scope>BIOPHYSICOCHEMICAL PROPERTIES</scope>
</reference>
<reference key="8">
    <citation type="journal article" date="2007" name="J. Biol. Chem.">
        <title>Oligomerization of the UDP-glucuronosyltransferase 1A proteins: homo- and heterodimerization analysis by fluorescence resonance energy transfer and co-immunoprecipitation.</title>
        <authorList>
            <person name="Operana T.N."/>
            <person name="Tukey R.H."/>
        </authorList>
    </citation>
    <scope>SUBUNIT</scope>
    <scope>SUBCELLULAR LOCATION</scope>
</reference>
<reference key="9">
    <citation type="journal article" date="2007" name="Mol. Pharm.">
        <title>Disposition of flavonoids via enteric recycling: enzyme stability affects characterization of prunetin glucuronidation across species, organs, and UGT isoforms.</title>
        <authorList>
            <person name="Joseph T.B."/>
            <person name="Wang S.W."/>
            <person name="Liu X."/>
            <person name="Kulkarni K.H."/>
            <person name="Wang J."/>
            <person name="Xu H."/>
            <person name="Hu M."/>
        </authorList>
    </citation>
    <scope>FUNCTION (ISOFORM 1)</scope>
    <scope>CATALYTIC ACTIVITY</scope>
    <scope>BIOPHYSICOCHEMICAL PROPERTIES</scope>
</reference>
<reference key="10">
    <citation type="journal article" date="2007" name="Pharmacogenet. Genomics">
        <title>Genetic diversity at the UGT1 locus is amplified by a novel 3' alternative splicing mechanism leading to nine additional UGT1A proteins that act as regulators of glucuronidation activity.</title>
        <authorList>
            <person name="Girard H."/>
            <person name="Levesque E."/>
            <person name="Bellemare J."/>
            <person name="Journault K."/>
            <person name="Caillier B."/>
            <person name="Guillemette C."/>
        </authorList>
    </citation>
    <scope>FUNCTION (ISOFORMS 1 AND 2)</scope>
    <scope>ALTERNATIVE SPLICING</scope>
    <scope>TISSUE SPECIFICITY</scope>
</reference>
<reference key="11">
    <citation type="journal article" date="2008" name="Biochem. Pharmacol.">
        <title>The human UDP-glucuronosyltransferase UGT1A3 is highly selective towards N2 in the tetrazole ring of losartan, candesartan, and zolarsartan.</title>
        <authorList>
            <person name="Alonen A."/>
            <person name="Finel M."/>
            <person name="Kostiainen R."/>
        </authorList>
    </citation>
    <scope>FUNCTION (ISOFORM 1)</scope>
    <scope>CATALYTIC ACTIVITY</scope>
</reference>
<reference key="12">
    <citation type="journal article" date="2008" name="Drug Metab. Dispos.">
        <title>The configuration of the 17-hydroxy group variably influences the glucuronidation of beta-estradiol and epiestradiol by human UDP-glucuronosyltransferases.</title>
        <authorList>
            <person name="Itaeaho K."/>
            <person name="Mackenzie P.I."/>
            <person name="Ikushiro S."/>
            <person name="Miners J.O."/>
            <person name="Finel M."/>
        </authorList>
    </citation>
    <scope>FUNCTION (ISOFORM 1)</scope>
    <scope>CATALYTIC ACTIVITY</scope>
    <scope>BIOPHYSICOCHEMICAL PROPERTIES</scope>
    <scope>SUBSTRATE SPECIFICITY</scope>
</reference>
<reference key="13">
    <citation type="journal article" date="2009" name="Mol. Pharm.">
        <title>Structure and concentration changes affect characterization of UGT isoform-specific metabolism of isoflavones.</title>
        <authorList>
            <person name="Tang L."/>
            <person name="Singh R."/>
            <person name="Liu Z."/>
            <person name="Hu M."/>
        </authorList>
    </citation>
    <scope>FUNCTION (ISOFORM 1)</scope>
    <scope>CATALYTIC ACTIVITY</scope>
    <scope>BIOPHYSICOCHEMICAL PROPERTIES</scope>
</reference>
<reference key="14">
    <citation type="journal article" date="2010" name="Drug Metab. Dispos.">
        <title>Alternatively spliced products of the UGT1A gene interact with the enzymatically active proteins to inhibit glucuronosyltransferase activity in vitro.</title>
        <authorList>
            <person name="Bellemare J."/>
            <person name="Rouleau M."/>
            <person name="Girard H."/>
            <person name="Harvey M."/>
            <person name="Guillemette C."/>
        </authorList>
    </citation>
    <scope>FUNCTION (ISOFORMS 1 AND 2)</scope>
    <scope>CATALYTIC ACTIVITY</scope>
    <scope>SUBUNIT</scope>
</reference>
<reference key="15">
    <citation type="journal article" date="2011" name="Drug Metab. Pharmacokinet.">
        <title>Identification of the human UDP-glucuronosyltransferase isoforms involved in the glucuronidation of the phytochemical ferulic acid.</title>
        <authorList>
            <person name="Li X."/>
            <person name="Shang L."/>
            <person name="Wu Y."/>
            <person name="Abbas S."/>
            <person name="Li D."/>
            <person name="Netter P."/>
            <person name="Ouzzine M."/>
            <person name="Wang H."/>
            <person name="Magdalou J."/>
        </authorList>
    </citation>
    <scope>FUNCTION</scope>
    <scope>CATALYTIC ACTIVITY</scope>
    <scope>BIOPHYSICOCHEMICAL PROPERTIES</scope>
</reference>
<reference key="16">
    <citation type="journal article" date="2013" name="Drug Metab. Dispos.">
        <title>Regiospecificity and stereospecificity of human UDP-glucuronosyltransferases in the glucuronidation of estriol, 16-epiestriol, 17-epiestriol, and 13-epiestradiol.</title>
        <authorList>
            <person name="Sneitz N."/>
            <person name="Vahermo M."/>
            <person name="Mosorin J."/>
            <person name="Laakkonen L."/>
            <person name="Poirier D."/>
            <person name="Finel M."/>
        </authorList>
    </citation>
    <scope>FUNCTION (ISOFORM 1)</scope>
    <scope>CATALYTIC ACTIVITY</scope>
    <scope>BIOPHYSICOCHEMICAL PROPERTIES</scope>
    <scope>SUBSTRATE SPECIFICITY</scope>
    <scope>MUTAGENESIS OF PHE-90 AND PHE-93</scope>
</reference>
<reference key="17">
    <citation type="journal article" date="2015" name="J. Steroid Biochem. Mol. Biol.">
        <title>Glucuronidation of estrone and 16alpha-hydroxyestrone by human UGT enzymes: The key roles of UGT1A10 and UGT2B7.</title>
        <authorList>
            <person name="Kallionpaeae R.A."/>
            <person name="Jaervinen E."/>
            <person name="Finel M."/>
        </authorList>
    </citation>
    <scope>FUNCTION (ISOFORM 1)</scope>
    <scope>CATALYTIC ACTIVITY</scope>
    <scope>BIOPHYSICOCHEMICAL PROPERTIES</scope>
    <scope>SUBSTRATE SPECIFICITY</scope>
    <scope>MUTAGENESIS OF PHE-93</scope>
</reference>
<reference key="18">
    <citation type="journal article" date="2002" name="Drug Metab. Pharmacokinet.">
        <title>Three novel single nucleotide polymorphisms in UGT1A10.</title>
        <authorList>
            <person name="Saeki M."/>
            <person name="Ozawa S."/>
            <person name="Saito Y."/>
            <person name="Jinno H."/>
            <person name="Hamaguchi T."/>
            <person name="Nokihara H."/>
            <person name="Shimada Y."/>
            <person name="Kunitoh H."/>
            <person name="Yamamoto N."/>
            <person name="Ohe Y."/>
            <person name="Yamada Y."/>
            <person name="Shirao K."/>
            <person name="Muto M."/>
            <person name="Mera K."/>
            <person name="Goto K."/>
            <person name="Ohmatsu H."/>
            <person name="Kubota K."/>
            <person name="Niho S."/>
            <person name="Kakinuma R."/>
            <person name="Minami H."/>
            <person name="Ohtsu A."/>
            <person name="Yoshida T."/>
            <person name="Saijo N."/>
            <person name="Sawada J."/>
        </authorList>
    </citation>
    <scope>VARIANTS ILE-59 AND ILE-202</scope>
</reference>
<keyword id="KW-0025">Alternative splicing</keyword>
<keyword id="KW-0256">Endoplasmic reticulum</keyword>
<keyword id="KW-0325">Glycoprotein</keyword>
<keyword id="KW-0328">Glycosyltransferase</keyword>
<keyword id="KW-0443">Lipid metabolism</keyword>
<keyword id="KW-0472">Membrane</keyword>
<keyword id="KW-1267">Proteomics identification</keyword>
<keyword id="KW-1185">Reference proteome</keyword>
<keyword id="KW-0732">Signal</keyword>
<keyword id="KW-0808">Transferase</keyword>
<keyword id="KW-0812">Transmembrane</keyword>
<keyword id="KW-1133">Transmembrane helix</keyword>
<proteinExistence type="evidence at protein level"/>
<gene>
    <name evidence="34" type="primary">UGT1A10</name>
    <name type="synonym">GNT1</name>
    <name type="synonym">UGT1</name>
</gene>
<organism>
    <name type="scientific">Homo sapiens</name>
    <name type="common">Human</name>
    <dbReference type="NCBI Taxonomy" id="9606"/>
    <lineage>
        <taxon>Eukaryota</taxon>
        <taxon>Metazoa</taxon>
        <taxon>Chordata</taxon>
        <taxon>Craniata</taxon>
        <taxon>Vertebrata</taxon>
        <taxon>Euteleostomi</taxon>
        <taxon>Mammalia</taxon>
        <taxon>Eutheria</taxon>
        <taxon>Euarchontoglires</taxon>
        <taxon>Primates</taxon>
        <taxon>Haplorrhini</taxon>
        <taxon>Catarrhini</taxon>
        <taxon>Hominidae</taxon>
        <taxon>Homo</taxon>
    </lineage>
</organism>
<comment type="function">
    <molecule>Isoform 1</molecule>
    <text evidence="2 3 7 8 9 10 11 13 14 15">UDP-glucuronosyltransferase (UGT) that catalyzes phase II biotransformation reactions in which lipophilic substrates are conjugated with glucuronic acid to increase the metabolite's water solubility, thereby facilitating excretion into either the urine or bile (PubMed:12181437, PubMed:18004212, PubMed:18052087, PubMed:18674515, PubMed:18719240, PubMed:19545173, PubMed:23288867, PubMed:26220143, PubMed:15231852, PubMed:21422672). Essential for the elimination and detoxification of drugs, xenobiotics and endogenous compounds (PubMed:12181437, PubMed:18004212). Catalyzes the glucuronidation of endogenous estrogen hormones such as estradiol, estrone and estriol (PubMed:18719240, PubMed:23288867, PubMed:26220143). Involved in the glucuronidation of arachidonic acid (AA) and AA-derived eicosanoids including 15-HETE and PGB1 (PubMed:15231852). Involved in the glucuronidation of the phytochemical ferulic acid at the phenolic or the carboxylic acid group (PubMed:21422672). Also catalyzes the glucuronidation of the isoflavones genistein, daidzein, glycitein, formononetin, biochanin A and prunetin, which are phytoestrogens with anticancer and cardiovascular properties (PubMed:18052087, PubMed:19545173). Involved in the glucuronidation of the AGTR1 angiotensin receptor antagonist losartan, caderastan and zolarsatan, drugs which can inhibit the effect of angiotensin II (PubMed:18674515).</text>
</comment>
<comment type="function">
    <molecule>Isoform 2</molecule>
    <text evidence="7 12">Lacks UGT glucuronidation activity but acts as a negative regulator of isoform 1.</text>
</comment>
<comment type="catalytic activity">
    <reaction evidence="3 8 9 10 11 12 13 14 15">
        <text>glucuronate acceptor + UDP-alpha-D-glucuronate = acceptor beta-D-glucuronoside + UDP + H(+)</text>
        <dbReference type="Rhea" id="RHEA:21032"/>
        <dbReference type="ChEBI" id="CHEBI:15378"/>
        <dbReference type="ChEBI" id="CHEBI:58052"/>
        <dbReference type="ChEBI" id="CHEBI:58223"/>
        <dbReference type="ChEBI" id="CHEBI:132367"/>
        <dbReference type="ChEBI" id="CHEBI:132368"/>
        <dbReference type="EC" id="2.4.1.17"/>
    </reaction>
    <physiologicalReaction direction="left-to-right" evidence="23 26 27 28 29 30 31 32 33">
        <dbReference type="Rhea" id="RHEA:21033"/>
    </physiologicalReaction>
</comment>
<comment type="catalytic activity">
    <reaction evidence="10 14">
        <text>17beta-estradiol + UDP-alpha-D-glucuronate = 17beta-estradiol 3-O-(beta-D-glucuronate) + UDP + H(+)</text>
        <dbReference type="Rhea" id="RHEA:52460"/>
        <dbReference type="ChEBI" id="CHEBI:15378"/>
        <dbReference type="ChEBI" id="CHEBI:16469"/>
        <dbReference type="ChEBI" id="CHEBI:58052"/>
        <dbReference type="ChEBI" id="CHEBI:58223"/>
        <dbReference type="ChEBI" id="CHEBI:136641"/>
    </reaction>
    <physiologicalReaction direction="left-to-right" evidence="28 32">
        <dbReference type="Rhea" id="RHEA:52461"/>
    </physiologicalReaction>
</comment>
<comment type="catalytic activity">
    <reaction evidence="10 14">
        <text>17beta-estradiol + UDP-alpha-D-glucuronate = 17beta-estradiol 17-O-(beta-D-glucuronate) + UDP + H(+)</text>
        <dbReference type="Rhea" id="RHEA:52464"/>
        <dbReference type="ChEBI" id="CHEBI:15378"/>
        <dbReference type="ChEBI" id="CHEBI:16469"/>
        <dbReference type="ChEBI" id="CHEBI:58052"/>
        <dbReference type="ChEBI" id="CHEBI:58223"/>
        <dbReference type="ChEBI" id="CHEBI:82961"/>
    </reaction>
    <physiologicalReaction direction="left-to-right" evidence="28 32">
        <dbReference type="Rhea" id="RHEA:52465"/>
    </physiologicalReaction>
</comment>
<comment type="catalytic activity">
    <reaction evidence="10 14">
        <text>17alpha-estradiol + UDP-alpha-D-glucuronate = 17alpha-estradiol 3-O-(beta-D-glucuronate) + UDP + H(+)</text>
        <dbReference type="Rhea" id="RHEA:52868"/>
        <dbReference type="ChEBI" id="CHEBI:15378"/>
        <dbReference type="ChEBI" id="CHEBI:17160"/>
        <dbReference type="ChEBI" id="CHEBI:57529"/>
        <dbReference type="ChEBI" id="CHEBI:58052"/>
        <dbReference type="ChEBI" id="CHEBI:58223"/>
    </reaction>
    <physiologicalReaction direction="left-to-right" evidence="28 32">
        <dbReference type="Rhea" id="RHEA:52869"/>
    </physiologicalReaction>
</comment>
<comment type="catalytic activity">
    <reaction evidence="14">
        <text>16alpha,17beta-estriol + UDP-alpha-D-glucuronate = 16alpha,17beta-estriol 3-O-(beta-D-glucuronate) + UDP + H(+)</text>
        <dbReference type="Rhea" id="RHEA:52468"/>
        <dbReference type="ChEBI" id="CHEBI:15378"/>
        <dbReference type="ChEBI" id="CHEBI:27974"/>
        <dbReference type="ChEBI" id="CHEBI:58052"/>
        <dbReference type="ChEBI" id="CHEBI:58223"/>
        <dbReference type="ChEBI" id="CHEBI:136649"/>
    </reaction>
    <physiologicalReaction direction="left-to-right" evidence="32">
        <dbReference type="Rhea" id="RHEA:52469"/>
    </physiologicalReaction>
</comment>
<comment type="catalytic activity">
    <reaction evidence="14">
        <text>16beta,17beta-estriol + UDP-alpha-D-glucuronate = 16beta,17beta-estriol 3-O-(beta-D-glucuronate) + UDP + H(+)</text>
        <dbReference type="Rhea" id="RHEA:52876"/>
        <dbReference type="ChEBI" id="CHEBI:15378"/>
        <dbReference type="ChEBI" id="CHEBI:58052"/>
        <dbReference type="ChEBI" id="CHEBI:58223"/>
        <dbReference type="ChEBI" id="CHEBI:87620"/>
        <dbReference type="ChEBI" id="CHEBI:136885"/>
    </reaction>
    <physiologicalReaction direction="left-to-right" evidence="32">
        <dbReference type="Rhea" id="RHEA:52877"/>
    </physiologicalReaction>
</comment>
<comment type="catalytic activity">
    <reaction evidence="14">
        <text>16alpha,17alpha-estriol + UDP-alpha-D-glucuronate = 16alpha,17alpha-estriol 3-O-(beta-D-glucuronate) + UDP + H(+)</text>
        <dbReference type="Rhea" id="RHEA:52924"/>
        <dbReference type="ChEBI" id="CHEBI:15378"/>
        <dbReference type="ChEBI" id="CHEBI:42156"/>
        <dbReference type="ChEBI" id="CHEBI:58052"/>
        <dbReference type="ChEBI" id="CHEBI:58223"/>
        <dbReference type="ChEBI" id="CHEBI:136882"/>
    </reaction>
    <physiologicalReaction direction="left-to-right" evidence="32">
        <dbReference type="Rhea" id="RHEA:52925"/>
    </physiologicalReaction>
</comment>
<comment type="catalytic activity">
    <reaction evidence="15">
        <text>16alpha-hydroxyestrone + UDP-alpha-D-glucuronate = 16alpha-hydroxyestrone 3-O-(beta-D-glucuronate) + UDP + H(+)</text>
        <dbReference type="Rhea" id="RHEA:52448"/>
        <dbReference type="ChEBI" id="CHEBI:776"/>
        <dbReference type="ChEBI" id="CHEBI:15378"/>
        <dbReference type="ChEBI" id="CHEBI:58052"/>
        <dbReference type="ChEBI" id="CHEBI:58223"/>
        <dbReference type="ChEBI" id="CHEBI:136635"/>
    </reaction>
    <physiologicalReaction direction="left-to-right" evidence="33">
        <dbReference type="Rhea" id="RHEA:52449"/>
    </physiologicalReaction>
</comment>
<comment type="catalytic activity">
    <reaction evidence="15">
        <text>estrone + UDP-alpha-D-glucuronate = estrone 3-O-(beta-D-glucuronate) + UDP + H(+)</text>
        <dbReference type="Rhea" id="RHEA:52476"/>
        <dbReference type="ChEBI" id="CHEBI:15378"/>
        <dbReference type="ChEBI" id="CHEBI:17263"/>
        <dbReference type="ChEBI" id="CHEBI:58052"/>
        <dbReference type="ChEBI" id="CHEBI:58223"/>
        <dbReference type="ChEBI" id="CHEBI:136634"/>
    </reaction>
    <physiologicalReaction direction="left-to-right" evidence="33">
        <dbReference type="Rhea" id="RHEA:52477"/>
    </physiologicalReaction>
</comment>
<comment type="catalytic activity">
    <reaction evidence="8">
        <text>prunetin + UDP-alpha-D-glucuronate = prunetin-4'-O-beta-D-glucuronide + UDP</text>
        <dbReference type="Rhea" id="RHEA:63588"/>
        <dbReference type="ChEBI" id="CHEBI:58052"/>
        <dbReference type="ChEBI" id="CHEBI:58223"/>
        <dbReference type="ChEBI" id="CHEBI:147403"/>
        <dbReference type="ChEBI" id="CHEBI:147404"/>
    </reaction>
    <physiologicalReaction direction="left-to-right" evidence="26">
        <dbReference type="Rhea" id="RHEA:63589"/>
    </physiologicalReaction>
</comment>
<comment type="catalytic activity">
    <reaction evidence="3">
        <text>(5Z,8Z,11Z,14Z)-eicosatetraenoate + UDP-alpha-D-glucuronate = O-[(5Z),(8Z),(11Z),(14Z)-eicosatetraenoyl]-beta-D-glucuronate + UDP</text>
        <dbReference type="Rhea" id="RHEA:79915"/>
        <dbReference type="ChEBI" id="CHEBI:32395"/>
        <dbReference type="ChEBI" id="CHEBI:58052"/>
        <dbReference type="ChEBI" id="CHEBI:58223"/>
        <dbReference type="ChEBI" id="CHEBI:231327"/>
    </reaction>
    <physiologicalReaction direction="left-to-right" evidence="23">
        <dbReference type="Rhea" id="RHEA:79916"/>
    </physiologicalReaction>
</comment>
<comment type="catalytic activity">
    <reaction evidence="3">
        <text>15-hydroxy-(5Z,8Z,11Z,13E)-eicosatetraenoate + UDP-alpha-D-glucuronate = 15-O-(beta-D-glucuronosyl)-(5Z,8Z,11Z,14Z)-eicosatetraenoate + UDP + H(+)</text>
        <dbReference type="Rhea" id="RHEA:79919"/>
        <dbReference type="ChEBI" id="CHEBI:15378"/>
        <dbReference type="ChEBI" id="CHEBI:58052"/>
        <dbReference type="ChEBI" id="CHEBI:58223"/>
        <dbReference type="ChEBI" id="CHEBI:78832"/>
        <dbReference type="ChEBI" id="CHEBI:231329"/>
    </reaction>
    <physiologicalReaction direction="left-to-right" evidence="23">
        <dbReference type="Rhea" id="RHEA:79920"/>
    </physiologicalReaction>
</comment>
<comment type="catalytic activity">
    <reaction evidence="3">
        <text>prostaglandin B1 + UDP-alpha-D-glucuronate = 15-O-(beta-D-glucuronosyl)-prostaglandin B1 + UDP + H(+)</text>
        <dbReference type="Rhea" id="RHEA:79935"/>
        <dbReference type="ChEBI" id="CHEBI:15378"/>
        <dbReference type="ChEBI" id="CHEBI:58052"/>
        <dbReference type="ChEBI" id="CHEBI:58223"/>
        <dbReference type="ChEBI" id="CHEBI:133393"/>
        <dbReference type="ChEBI" id="CHEBI:231330"/>
    </reaction>
    <physiologicalReaction direction="left-to-right" evidence="23">
        <dbReference type="Rhea" id="RHEA:79936"/>
    </physiologicalReaction>
</comment>
<comment type="catalytic activity">
    <reaction evidence="13">
        <text>(E)-ferulate + UDP-alpha-D-glucuronate = (E)-4-O-(beta-D-glucuronosyl)-ferulate + UDP + H(+)</text>
        <dbReference type="Rhea" id="RHEA:79951"/>
        <dbReference type="ChEBI" id="CHEBI:15378"/>
        <dbReference type="ChEBI" id="CHEBI:29749"/>
        <dbReference type="ChEBI" id="CHEBI:58052"/>
        <dbReference type="ChEBI" id="CHEBI:58223"/>
        <dbReference type="ChEBI" id="CHEBI:231331"/>
    </reaction>
    <physiologicalReaction direction="left-to-right" evidence="31">
        <dbReference type="Rhea" id="RHEA:79952"/>
    </physiologicalReaction>
</comment>
<comment type="catalytic activity">
    <reaction evidence="13">
        <text>(E)-ferulate + UDP-alpha-D-glucuronate = (E)-ferulic acid beta-D-glucuronate ester + UDP</text>
        <dbReference type="Rhea" id="RHEA:79955"/>
        <dbReference type="ChEBI" id="CHEBI:29749"/>
        <dbReference type="ChEBI" id="CHEBI:58052"/>
        <dbReference type="ChEBI" id="CHEBI:58223"/>
        <dbReference type="ChEBI" id="CHEBI:231332"/>
    </reaction>
    <physiologicalReaction direction="left-to-right" evidence="31">
        <dbReference type="Rhea" id="RHEA:79956"/>
    </physiologicalReaction>
</comment>
<comment type="catalytic activity">
    <reaction evidence="9">
        <text>losartan + UDP-alpha-D-glucuronate = losartan-2-N-beta-D-glucuronide + UDP</text>
        <dbReference type="Rhea" id="RHEA:63720"/>
        <dbReference type="ChEBI" id="CHEBI:58052"/>
        <dbReference type="ChEBI" id="CHEBI:58223"/>
        <dbReference type="ChEBI" id="CHEBI:149504"/>
        <dbReference type="ChEBI" id="CHEBI:149507"/>
    </reaction>
    <physiologicalReaction direction="left-to-right" evidence="27">
        <dbReference type="Rhea" id="RHEA:63721"/>
    </physiologicalReaction>
</comment>
<comment type="catalytic activity">
    <reaction evidence="9">
        <text>candesartan + UDP-alpha-D-glucuronate = candesartan O-beta-D-glucuronoside + UDP</text>
        <dbReference type="Rhea" id="RHEA:63724"/>
        <dbReference type="ChEBI" id="CHEBI:58052"/>
        <dbReference type="ChEBI" id="CHEBI:58223"/>
        <dbReference type="ChEBI" id="CHEBI:149509"/>
        <dbReference type="ChEBI" id="CHEBI:149522"/>
    </reaction>
    <physiologicalReaction direction="left-to-right" evidence="27">
        <dbReference type="Rhea" id="RHEA:63725"/>
    </physiologicalReaction>
</comment>
<comment type="catalytic activity">
    <reaction evidence="9">
        <text>candesartan + UDP-alpha-D-glucuronate = candesartan-2-N-beta-D-glucuronide + UDP</text>
        <dbReference type="Rhea" id="RHEA:63728"/>
        <dbReference type="ChEBI" id="CHEBI:58052"/>
        <dbReference type="ChEBI" id="CHEBI:58223"/>
        <dbReference type="ChEBI" id="CHEBI:149509"/>
        <dbReference type="ChEBI" id="CHEBI:149523"/>
    </reaction>
    <physiologicalReaction direction="left-to-right" evidence="27">
        <dbReference type="Rhea" id="RHEA:63729"/>
    </physiologicalReaction>
</comment>
<comment type="catalytic activity">
    <reaction evidence="9">
        <text>zolasartan + UDP-alpha-D-glucuronate = zolarsartan-1-N-beta-D-glucuronide + UDP</text>
        <dbReference type="Rhea" id="RHEA:63744"/>
        <dbReference type="ChEBI" id="CHEBI:58052"/>
        <dbReference type="ChEBI" id="CHEBI:58223"/>
        <dbReference type="ChEBI" id="CHEBI:149524"/>
        <dbReference type="ChEBI" id="CHEBI:149527"/>
    </reaction>
    <physiologicalReaction direction="left-to-right" evidence="27">
        <dbReference type="Rhea" id="RHEA:63745"/>
    </physiologicalReaction>
</comment>
<comment type="biophysicochemical properties">
    <kinetics>
        <KM evidence="15">13 uM for estrone (when assaying glucuronidation at position 3)</KM>
        <KM evidence="10">4.07 uM for 17beta-estradiol/estradiol (when assaying glucuronidation at position 3)</KM>
        <KM evidence="10">2.63 uM for 17beta-estradiol/estradiol (when assaying glucuronidation at position 17)</KM>
        <KM evidence="10">21.8 uM for 17alpha-estradiol/epiestradiol (when assaying glucuronidation at position 3)</KM>
        <KM evidence="14">68.4 uM for 16alpha,17beta-estriol/estriol (when assaying glucuronidation at position 3)</KM>
        <KM evidence="14">59.8 uM for 16beta,17beta-estriol (when assaying glucuronidation at position 3)</KM>
        <KM evidence="14">337 uM for 16alpha,17alpha-estriol (when assaying glucuronidation at position 3)</KM>
        <KM evidence="11">12.34 uM for genistein</KM>
        <KM evidence="13">2490 uM for (E)-ferulate (when assaying glucuronidation at the phenolic group)</KM>
        <KM evidence="13">1040 uM for (E)-ferulate (when assaying glucuronidation at the carboxylic acid group)</KM>
        <KM evidence="2">31.5 uM for SN-38 (when assaying glucuronidation at position 10)</KM>
        <Vmax evidence="15">1300.0 pmol/min/mg enzyme for the formation of estrone 3-O-(beta-D-glucuronate)</Vmax>
        <Vmax evidence="10">6340.0 pmol/min/mg enzyme for the formation of 17beta-estradiol 3-O-(beta-D-glucuronate)</Vmax>
        <Vmax evidence="10">83.6 pmol/min/mg enzyme for the formation of 17beta-estradiol 17-O-(beta-D-glucuronate)</Vmax>
        <Vmax evidence="10">2100.0 pmol/min/mg enzyme for the formation of 17alpha-estradiol 3-O-(beta-D-glucuronate)</Vmax>
        <Vmax evidence="14">3040.0 pmol/min/mg enzyme for the formation of 17beta-estradiol 3-O-(beta-D-glucuronate)</Vmax>
        <Vmax evidence="14">107.0 pmol/min/mg enzyme for the formation of 17beta-estradiol 17-O-(beta-D-glucuronate)</Vmax>
        <Vmax evidence="14">321.0 pmol/min/mg enzyme for the formation of 17alpha-estradiol 3-O-(beta-D-glucuronate)</Vmax>
        <Vmax evidence="14">8.5 pmol/min/mg enzyme for the formation of 17alpha-estradiol 17-O-(beta-D-glucuronate)</Vmax>
        <Vmax evidence="14">1200.0 pmol/min/mg enzyme for the formation of 16alpha,17beta-estriol 3-O-(beta-D-glucuronate)</Vmax>
        <Vmax evidence="14">837.0 pmol/min/mg enzyme for the formation of 16alpha,17beta-estriol 3-O-(beta-D-glucuronate)</Vmax>
        <Vmax evidence="14">7700.0 pmol/min/mg enzyme for the formation of 16beta,17beta-estriol 3-O-(beta-D-glucuronate)</Vmax>
        <Vmax evidence="14">3486.0 pmol/min/mg enzyme for the formation of 16beta,17beta-estriol 3-O-(beta-D-glucuronate)</Vmax>
        <Vmax evidence="14">958.0 pmol/min/mg enzyme for the formation of 16alpha,17alpha-estriol 3-O-(beta-D-glucuronate)</Vmax>
        <Vmax evidence="14">407.0 pmol/min/mg enzyme for the formation of 16alpha,17alpha-estriol 3-O-(beta-D-glucuronate)</Vmax>
        <Vmax evidence="4">3.0 pmol/min/mg enzyme for the formation of 17beta-estradiol 3-O-(beta-D-glucuronate)</Vmax>
        <Vmax evidence="4">3.0 pmol/min/mg enzyme for the formation of estrone 3-O-(beta-D-glucuronate)</Vmax>
        <Vmax evidence="4">11.0 pmol/min/mg enzyme for the formation of 2-methoxy-17beta-estradiol 3-O-(beta-D-glucuronate)</Vmax>
        <Vmax evidence="11">1.04 nmol/min/mg enzyme for the formation of genistein glucuronide</Vmax>
        <Vmax evidence="8">0.25 nmol/min/mg enzyme for the formation of prunetin-4'-O-(beta-D-glucuronoside)</Vmax>
        <Vmax evidence="13">207.0 pmol/min/mg enzyme for the formation of (E)-4-O-(beta-D-glucuronosyl)-ferulate</Vmax>
        <Vmax evidence="13">1.0 pmol/min/mg enzyme for the formation of (E)-ferulic acid beta-D-glucuronate ester</Vmax>
        <Vmax evidence="2">7.6 pmol/min/mg enzyme for the formation of SN-38 glucuronide</Vmax>
        <text evidence="22 24 26 29">Some kinetic parameters were assessed using commercial enzymes, which may represent a mix of both active and inactive protein forms, and therefore modify the kinetic values.</text>
    </kinetics>
</comment>
<comment type="subunit">
    <text evidence="6 12 30">Homodimer (PubMed:17179145). Homooligomer (Probable). Interacts with UGT1A1, UGT1A3, UGT1A4, UGT1A6, UGT1A7, UGT1A8 and UGT1A9 to form heterodimers (PubMed:17179145). Isoform 1 interacts with isoform 2/i2 suggesting that oligomerization is involved in negative regulation of transferase activity by isoform 2. Isoform 1 also interacts with respective i2 isoforms of UGT1A1, UGT1A3, UGT1A4, UGT1A6, UGT1A7, UGT1A8 and UGT1A9 (PubMed:20610558).</text>
</comment>
<comment type="subcellular location">
    <subcellularLocation>
        <location evidence="25">Endoplasmic reticulum membrane</location>
        <topology evidence="1">Single-pass membrane protein</topology>
    </subcellularLocation>
</comment>
<comment type="alternative products">
    <event type="alternative splicing"/>
    <isoform>
        <id>Q9HAW8-1</id>
        <name>1</name>
        <name evidence="20">i1</name>
        <sequence type="displayed"/>
    </isoform>
    <isoform>
        <id>Q9HAW8-2</id>
        <name>2</name>
        <name evidence="20">i2</name>
        <name>UGT1A10s</name>
        <sequence type="described" ref="VSP_053966"/>
    </isoform>
</comment>
<comment type="tissue specificity">
    <text evidence="7 16">Liver and colon (PubMed:9271343). Isoform 1 and isoform 2 are expressed in colon, esophagus and small intestine; isoform 2 but not isoform 1 is expressed in liver or kidney (PubMed:18004212).</text>
</comment>
<comment type="miscellaneous">
    <text evidence="7">UGT1A10 isoform is part of the UGT1A complex locus which displays alternative use of promoters, first exons and terminal exons. The locus is defined by 13 first exons, which are alternatively spliced to 3 other common exons and 2 alternative terminal exons 5. From the 27 possible mRNA isoforms, 9 produce functionally active polypeptides (UGT1A1, 1A3, 1A4, 1A5, 1A6, 1A7, 1A8, 1A9 and 1A10) called isoforms 1 (i1). Use of an alternative exon 5 (5b) as terminal exon is leading to 9 additional alternatively spliced products termed isoforms i2 and which lack transferase activity.</text>
</comment>
<comment type="similarity">
    <text evidence="21">Belongs to the UDP-glycosyltransferase family.</text>
</comment>
<name>UD110_HUMAN</name>